<organism>
    <name type="scientific">Lepidosiren paradoxus</name>
    <name type="common">South American lungfish</name>
    <dbReference type="NCBI Taxonomy" id="7883"/>
    <lineage>
        <taxon>Eukaryota</taxon>
        <taxon>Metazoa</taxon>
        <taxon>Chordata</taxon>
        <taxon>Craniata</taxon>
        <taxon>Vertebrata</taxon>
        <taxon>Euteleostomi</taxon>
        <taxon>Dipnomorpha</taxon>
        <taxon>Ceratodontiformes</taxon>
        <taxon>Lepidosirenoidei</taxon>
        <taxon>Lepidosirenidae</taxon>
        <taxon>Lepidosiren</taxon>
    </lineage>
</organism>
<evidence type="ECO:0000255" key="1">
    <source>
        <dbReference type="PROSITE-ProRule" id="PRU00238"/>
    </source>
</evidence>
<dbReference type="PIR" id="A02349">
    <property type="entry name" value="HALUA"/>
</dbReference>
<dbReference type="SMR" id="P02020"/>
<dbReference type="GO" id="GO:0072562">
    <property type="term" value="C:blood microparticle"/>
    <property type="evidence" value="ECO:0007669"/>
    <property type="project" value="TreeGrafter"/>
</dbReference>
<dbReference type="GO" id="GO:0031838">
    <property type="term" value="C:haptoglobin-hemoglobin complex"/>
    <property type="evidence" value="ECO:0007669"/>
    <property type="project" value="TreeGrafter"/>
</dbReference>
<dbReference type="GO" id="GO:0005833">
    <property type="term" value="C:hemoglobin complex"/>
    <property type="evidence" value="ECO:0007669"/>
    <property type="project" value="InterPro"/>
</dbReference>
<dbReference type="GO" id="GO:0031720">
    <property type="term" value="F:haptoglobin binding"/>
    <property type="evidence" value="ECO:0007669"/>
    <property type="project" value="TreeGrafter"/>
</dbReference>
<dbReference type="GO" id="GO:0020037">
    <property type="term" value="F:heme binding"/>
    <property type="evidence" value="ECO:0007669"/>
    <property type="project" value="InterPro"/>
</dbReference>
<dbReference type="GO" id="GO:0046872">
    <property type="term" value="F:metal ion binding"/>
    <property type="evidence" value="ECO:0007669"/>
    <property type="project" value="UniProtKB-KW"/>
</dbReference>
<dbReference type="GO" id="GO:0043177">
    <property type="term" value="F:organic acid binding"/>
    <property type="evidence" value="ECO:0007669"/>
    <property type="project" value="TreeGrafter"/>
</dbReference>
<dbReference type="GO" id="GO:0019825">
    <property type="term" value="F:oxygen binding"/>
    <property type="evidence" value="ECO:0007669"/>
    <property type="project" value="InterPro"/>
</dbReference>
<dbReference type="GO" id="GO:0005344">
    <property type="term" value="F:oxygen carrier activity"/>
    <property type="evidence" value="ECO:0007669"/>
    <property type="project" value="UniProtKB-KW"/>
</dbReference>
<dbReference type="GO" id="GO:0004601">
    <property type="term" value="F:peroxidase activity"/>
    <property type="evidence" value="ECO:0007669"/>
    <property type="project" value="TreeGrafter"/>
</dbReference>
<dbReference type="GO" id="GO:0042744">
    <property type="term" value="P:hydrogen peroxide catabolic process"/>
    <property type="evidence" value="ECO:0007669"/>
    <property type="project" value="TreeGrafter"/>
</dbReference>
<dbReference type="CDD" id="cd08927">
    <property type="entry name" value="Hb-alpha-like"/>
    <property type="match status" value="1"/>
</dbReference>
<dbReference type="Gene3D" id="1.10.490.10">
    <property type="entry name" value="Globins"/>
    <property type="match status" value="1"/>
</dbReference>
<dbReference type="InterPro" id="IPR000971">
    <property type="entry name" value="Globin"/>
</dbReference>
<dbReference type="InterPro" id="IPR009050">
    <property type="entry name" value="Globin-like_sf"/>
</dbReference>
<dbReference type="InterPro" id="IPR012292">
    <property type="entry name" value="Globin/Proto"/>
</dbReference>
<dbReference type="InterPro" id="IPR002338">
    <property type="entry name" value="Hemoglobin_a-typ"/>
</dbReference>
<dbReference type="InterPro" id="IPR050056">
    <property type="entry name" value="Hemoglobin_oxygen_transport"/>
</dbReference>
<dbReference type="PANTHER" id="PTHR11442">
    <property type="entry name" value="HEMOGLOBIN FAMILY MEMBER"/>
    <property type="match status" value="1"/>
</dbReference>
<dbReference type="Pfam" id="PF00042">
    <property type="entry name" value="Globin"/>
    <property type="match status" value="1"/>
</dbReference>
<dbReference type="SUPFAM" id="SSF46458">
    <property type="entry name" value="Globin-like"/>
    <property type="match status" value="1"/>
</dbReference>
<dbReference type="PROSITE" id="PS01033">
    <property type="entry name" value="GLOBIN"/>
    <property type="match status" value="1"/>
</dbReference>
<protein>
    <recommendedName>
        <fullName>Hemoglobin subunit alpha</fullName>
    </recommendedName>
    <alternativeName>
        <fullName>Alpha-globin</fullName>
    </alternativeName>
    <alternativeName>
        <fullName>Hemoglobin alpha chain</fullName>
    </alternativeName>
</protein>
<name>HBA_LEPPA</name>
<accession>P02020</accession>
<comment type="function">
    <text>Involved in oxygen transport from the lung to the various peripheral tissues.</text>
</comment>
<comment type="subunit">
    <text>Heterotetramer of two alpha chains and two beta chains.</text>
</comment>
<comment type="tissue specificity">
    <text>Red blood cells.</text>
</comment>
<comment type="similarity">
    <text evidence="1">Belongs to the globin family.</text>
</comment>
<keyword id="KW-0903">Direct protein sequencing</keyword>
<keyword id="KW-0349">Heme</keyword>
<keyword id="KW-0408">Iron</keyword>
<keyword id="KW-0479">Metal-binding</keyword>
<keyword id="KW-0561">Oxygen transport</keyword>
<keyword id="KW-0813">Transport</keyword>
<sequence length="143" mass="16092">MRFSQDDEVLIKEAWGLLHQIPNAGGEALARMFSCYPGTKSYFPHFGHDFSANNEKVKHHGKKVVDAIGQGVQHLHDLSSCLHTLSEKHARELMVDPCNFQYLIEAIMTTIAAHYGEKFTPEINCAAEKCLGQIVHVLISLYR</sequence>
<gene>
    <name type="primary">HBA</name>
</gene>
<feature type="chain" id="PRO_0000052667" description="Hemoglobin subunit alpha">
    <location>
        <begin position="1"/>
        <end position="143"/>
    </location>
</feature>
<feature type="domain" description="Globin" evidence="1">
    <location>
        <begin position="2"/>
        <end position="143"/>
    </location>
</feature>
<feature type="binding site" evidence="1">
    <location>
        <position position="60"/>
    </location>
    <ligand>
        <name>O2</name>
        <dbReference type="ChEBI" id="CHEBI:15379"/>
    </ligand>
</feature>
<feature type="binding site" description="proximal binding residue" evidence="1">
    <location>
        <position position="89"/>
    </location>
    <ligand>
        <name>heme b</name>
        <dbReference type="ChEBI" id="CHEBI:60344"/>
    </ligand>
    <ligandPart>
        <name>Fe</name>
        <dbReference type="ChEBI" id="CHEBI:18248"/>
    </ligandPart>
</feature>
<proteinExistence type="evidence at protein level"/>
<reference key="1">
    <citation type="journal article" date="1984" name="Hoppe-Seyler's Z. Physiol. Chem.">
        <title>Primary structure, biochemical and physiological aspects of hemoglobin from South American lungfish (Lepidosiren paradoxus, Dipnoi).</title>
        <authorList>
            <person name="Rodewald K."/>
            <person name="Stangl A."/>
            <person name="Braunitzer G."/>
        </authorList>
    </citation>
    <scope>PROTEIN SEQUENCE</scope>
</reference>